<name>METK_CHLP8</name>
<keyword id="KW-0067">ATP-binding</keyword>
<keyword id="KW-0963">Cytoplasm</keyword>
<keyword id="KW-0460">Magnesium</keyword>
<keyword id="KW-0479">Metal-binding</keyword>
<keyword id="KW-0547">Nucleotide-binding</keyword>
<keyword id="KW-0554">One-carbon metabolism</keyword>
<keyword id="KW-0630">Potassium</keyword>
<keyword id="KW-0808">Transferase</keyword>
<accession>B3QMF6</accession>
<sequence length="404" mass="44373">MSHSRYFFTSESVSEGHPDKVSDQISDAVLDEFIKQDPNSRVACETFVTTGQVIVGGEVTTKGIVDIQTIARKTITEIGYTKGEYMFDANSCGVLSALHSQSPDINRGVDRKEEIEDEFDRVGAGDQGMMFGYACTDTPELMPAAIQYAQELVRLLAEIRKEGKIMTYLRPDSKSQVTLEYDENDKVLRVDAVVVSTQHDPEPAGMSEAEFQEVIKNDIIENVIRKVIPAELIDENTKFHINPTGRFEIGGPHGDTGLTGRKIIVDTYGGAAPHGGGAFSGKDPSKVDRSAAYAARHVAKNIVAAGLADKCTVQVSYAIGVARPVSIYINTHGTGKHGLSDSQIQEKAEAIFDLRPLAIIRRFNLDRPHGWCYRDTAAYGHFGREQFPWEKTEKVAELKAAFGL</sequence>
<protein>
    <recommendedName>
        <fullName evidence="1">S-adenosylmethionine synthase</fullName>
        <shortName evidence="1">AdoMet synthase</shortName>
        <ecNumber evidence="1">2.5.1.6</ecNumber>
    </recommendedName>
    <alternativeName>
        <fullName evidence="1">MAT</fullName>
    </alternativeName>
    <alternativeName>
        <fullName evidence="1">Methionine adenosyltransferase</fullName>
    </alternativeName>
</protein>
<dbReference type="EC" id="2.5.1.6" evidence="1"/>
<dbReference type="EMBL" id="CP001099">
    <property type="protein sequence ID" value="ACF11109.1"/>
    <property type="molecule type" value="Genomic_DNA"/>
</dbReference>
<dbReference type="RefSeq" id="WP_012501942.1">
    <property type="nucleotide sequence ID" value="NC_011027.1"/>
</dbReference>
<dbReference type="SMR" id="B3QMF6"/>
<dbReference type="STRING" id="517417.Cpar_0689"/>
<dbReference type="KEGG" id="cpc:Cpar_0689"/>
<dbReference type="eggNOG" id="COG0192">
    <property type="taxonomic scope" value="Bacteria"/>
</dbReference>
<dbReference type="HOGENOM" id="CLU_041802_1_1_10"/>
<dbReference type="OrthoDB" id="9801686at2"/>
<dbReference type="UniPathway" id="UPA00315">
    <property type="reaction ID" value="UER00080"/>
</dbReference>
<dbReference type="Proteomes" id="UP000008811">
    <property type="component" value="Chromosome"/>
</dbReference>
<dbReference type="GO" id="GO:0005737">
    <property type="term" value="C:cytoplasm"/>
    <property type="evidence" value="ECO:0007669"/>
    <property type="project" value="UniProtKB-SubCell"/>
</dbReference>
<dbReference type="GO" id="GO:0005524">
    <property type="term" value="F:ATP binding"/>
    <property type="evidence" value="ECO:0007669"/>
    <property type="project" value="UniProtKB-UniRule"/>
</dbReference>
<dbReference type="GO" id="GO:0000287">
    <property type="term" value="F:magnesium ion binding"/>
    <property type="evidence" value="ECO:0007669"/>
    <property type="project" value="UniProtKB-UniRule"/>
</dbReference>
<dbReference type="GO" id="GO:0004478">
    <property type="term" value="F:methionine adenosyltransferase activity"/>
    <property type="evidence" value="ECO:0007669"/>
    <property type="project" value="UniProtKB-UniRule"/>
</dbReference>
<dbReference type="GO" id="GO:0006730">
    <property type="term" value="P:one-carbon metabolic process"/>
    <property type="evidence" value="ECO:0007669"/>
    <property type="project" value="UniProtKB-KW"/>
</dbReference>
<dbReference type="GO" id="GO:0006556">
    <property type="term" value="P:S-adenosylmethionine biosynthetic process"/>
    <property type="evidence" value="ECO:0007669"/>
    <property type="project" value="UniProtKB-UniRule"/>
</dbReference>
<dbReference type="CDD" id="cd18079">
    <property type="entry name" value="S-AdoMet_synt"/>
    <property type="match status" value="1"/>
</dbReference>
<dbReference type="FunFam" id="3.30.300.10:FF:000003">
    <property type="entry name" value="S-adenosylmethionine synthase"/>
    <property type="match status" value="1"/>
</dbReference>
<dbReference type="Gene3D" id="3.30.300.10">
    <property type="match status" value="3"/>
</dbReference>
<dbReference type="HAMAP" id="MF_00086">
    <property type="entry name" value="S_AdoMet_synth1"/>
    <property type="match status" value="1"/>
</dbReference>
<dbReference type="InterPro" id="IPR022631">
    <property type="entry name" value="ADOMET_SYNTHASE_CS"/>
</dbReference>
<dbReference type="InterPro" id="IPR022630">
    <property type="entry name" value="S-AdoMet_synt_C"/>
</dbReference>
<dbReference type="InterPro" id="IPR022629">
    <property type="entry name" value="S-AdoMet_synt_central"/>
</dbReference>
<dbReference type="InterPro" id="IPR022628">
    <property type="entry name" value="S-AdoMet_synt_N"/>
</dbReference>
<dbReference type="InterPro" id="IPR002133">
    <property type="entry name" value="S-AdoMet_synthetase"/>
</dbReference>
<dbReference type="InterPro" id="IPR022636">
    <property type="entry name" value="S-AdoMet_synthetase_sfam"/>
</dbReference>
<dbReference type="NCBIfam" id="TIGR01034">
    <property type="entry name" value="metK"/>
    <property type="match status" value="1"/>
</dbReference>
<dbReference type="PANTHER" id="PTHR11964">
    <property type="entry name" value="S-ADENOSYLMETHIONINE SYNTHETASE"/>
    <property type="match status" value="1"/>
</dbReference>
<dbReference type="Pfam" id="PF02773">
    <property type="entry name" value="S-AdoMet_synt_C"/>
    <property type="match status" value="1"/>
</dbReference>
<dbReference type="Pfam" id="PF02772">
    <property type="entry name" value="S-AdoMet_synt_M"/>
    <property type="match status" value="1"/>
</dbReference>
<dbReference type="Pfam" id="PF00438">
    <property type="entry name" value="S-AdoMet_synt_N"/>
    <property type="match status" value="1"/>
</dbReference>
<dbReference type="PIRSF" id="PIRSF000497">
    <property type="entry name" value="MAT"/>
    <property type="match status" value="1"/>
</dbReference>
<dbReference type="SUPFAM" id="SSF55973">
    <property type="entry name" value="S-adenosylmethionine synthetase"/>
    <property type="match status" value="3"/>
</dbReference>
<dbReference type="PROSITE" id="PS00376">
    <property type="entry name" value="ADOMET_SYNTHASE_1"/>
    <property type="match status" value="1"/>
</dbReference>
<dbReference type="PROSITE" id="PS00377">
    <property type="entry name" value="ADOMET_SYNTHASE_2"/>
    <property type="match status" value="1"/>
</dbReference>
<feature type="chain" id="PRO_1000093035" description="S-adenosylmethionine synthase">
    <location>
        <begin position="1"/>
        <end position="404"/>
    </location>
</feature>
<feature type="region of interest" description="Disordered" evidence="2">
    <location>
        <begin position="1"/>
        <end position="20"/>
    </location>
</feature>
<feature type="region of interest" description="Flexible loop" evidence="1">
    <location>
        <begin position="101"/>
        <end position="111"/>
    </location>
</feature>
<feature type="compositionally biased region" description="Polar residues" evidence="2">
    <location>
        <begin position="1"/>
        <end position="13"/>
    </location>
</feature>
<feature type="binding site" description="in other chain" evidence="1">
    <location>
        <position position="17"/>
    </location>
    <ligand>
        <name>ATP</name>
        <dbReference type="ChEBI" id="CHEBI:30616"/>
        <note>ligand shared between two neighboring subunits</note>
    </ligand>
</feature>
<feature type="binding site" evidence="1">
    <location>
        <position position="19"/>
    </location>
    <ligand>
        <name>Mg(2+)</name>
        <dbReference type="ChEBI" id="CHEBI:18420"/>
    </ligand>
</feature>
<feature type="binding site" evidence="1">
    <location>
        <position position="45"/>
    </location>
    <ligand>
        <name>K(+)</name>
        <dbReference type="ChEBI" id="CHEBI:29103"/>
    </ligand>
</feature>
<feature type="binding site" description="in other chain" evidence="1">
    <location>
        <position position="58"/>
    </location>
    <ligand>
        <name>L-methionine</name>
        <dbReference type="ChEBI" id="CHEBI:57844"/>
        <note>ligand shared between two neighboring subunits</note>
    </ligand>
</feature>
<feature type="binding site" description="in other chain" evidence="1">
    <location>
        <position position="101"/>
    </location>
    <ligand>
        <name>L-methionine</name>
        <dbReference type="ChEBI" id="CHEBI:57844"/>
        <note>ligand shared between two neighboring subunits</note>
    </ligand>
</feature>
<feature type="binding site" description="in other chain" evidence="1">
    <location>
        <begin position="172"/>
        <end position="174"/>
    </location>
    <ligand>
        <name>ATP</name>
        <dbReference type="ChEBI" id="CHEBI:30616"/>
        <note>ligand shared between two neighboring subunits</note>
    </ligand>
</feature>
<feature type="binding site" description="in other chain" evidence="1">
    <location>
        <begin position="246"/>
        <end position="247"/>
    </location>
    <ligand>
        <name>ATP</name>
        <dbReference type="ChEBI" id="CHEBI:30616"/>
        <note>ligand shared between two neighboring subunits</note>
    </ligand>
</feature>
<feature type="binding site" evidence="1">
    <location>
        <position position="255"/>
    </location>
    <ligand>
        <name>ATP</name>
        <dbReference type="ChEBI" id="CHEBI:30616"/>
        <note>ligand shared between two neighboring subunits</note>
    </ligand>
</feature>
<feature type="binding site" evidence="1">
    <location>
        <position position="255"/>
    </location>
    <ligand>
        <name>L-methionine</name>
        <dbReference type="ChEBI" id="CHEBI:57844"/>
        <note>ligand shared between two neighboring subunits</note>
    </ligand>
</feature>
<feature type="binding site" description="in other chain" evidence="1">
    <location>
        <begin position="261"/>
        <end position="262"/>
    </location>
    <ligand>
        <name>ATP</name>
        <dbReference type="ChEBI" id="CHEBI:30616"/>
        <note>ligand shared between two neighboring subunits</note>
    </ligand>
</feature>
<feature type="binding site" evidence="1">
    <location>
        <position position="278"/>
    </location>
    <ligand>
        <name>ATP</name>
        <dbReference type="ChEBI" id="CHEBI:30616"/>
        <note>ligand shared between two neighboring subunits</note>
    </ligand>
</feature>
<feature type="binding site" evidence="1">
    <location>
        <position position="282"/>
    </location>
    <ligand>
        <name>ATP</name>
        <dbReference type="ChEBI" id="CHEBI:30616"/>
        <note>ligand shared between two neighboring subunits</note>
    </ligand>
</feature>
<feature type="binding site" description="in other chain" evidence="1">
    <location>
        <position position="286"/>
    </location>
    <ligand>
        <name>L-methionine</name>
        <dbReference type="ChEBI" id="CHEBI:57844"/>
        <note>ligand shared between two neighboring subunits</note>
    </ligand>
</feature>
<reference key="1">
    <citation type="submission" date="2008-06" db="EMBL/GenBank/DDBJ databases">
        <title>Complete sequence of Chlorobaculum parvum NCIB 8327.</title>
        <authorList>
            <consortium name="US DOE Joint Genome Institute"/>
            <person name="Lucas S."/>
            <person name="Copeland A."/>
            <person name="Lapidus A."/>
            <person name="Glavina del Rio T."/>
            <person name="Dalin E."/>
            <person name="Tice H."/>
            <person name="Bruce D."/>
            <person name="Goodwin L."/>
            <person name="Pitluck S."/>
            <person name="Schmutz J."/>
            <person name="Larimer F."/>
            <person name="Land M."/>
            <person name="Hauser L."/>
            <person name="Kyrpides N."/>
            <person name="Mikhailova N."/>
            <person name="Zhao F."/>
            <person name="Li T."/>
            <person name="Liu Z."/>
            <person name="Overmann J."/>
            <person name="Bryant D.A."/>
            <person name="Richardson P."/>
        </authorList>
    </citation>
    <scope>NUCLEOTIDE SEQUENCE [LARGE SCALE GENOMIC DNA]</scope>
    <source>
        <strain>DSM 263 / NCIMB 8327</strain>
    </source>
</reference>
<evidence type="ECO:0000255" key="1">
    <source>
        <dbReference type="HAMAP-Rule" id="MF_00086"/>
    </source>
</evidence>
<evidence type="ECO:0000256" key="2">
    <source>
        <dbReference type="SAM" id="MobiDB-lite"/>
    </source>
</evidence>
<organism>
    <name type="scientific">Chlorobaculum parvum (strain DSM 263 / NCIMB 8327)</name>
    <name type="common">Chlorobium vibrioforme subsp. thiosulfatophilum</name>
    <dbReference type="NCBI Taxonomy" id="517417"/>
    <lineage>
        <taxon>Bacteria</taxon>
        <taxon>Pseudomonadati</taxon>
        <taxon>Chlorobiota</taxon>
        <taxon>Chlorobiia</taxon>
        <taxon>Chlorobiales</taxon>
        <taxon>Chlorobiaceae</taxon>
        <taxon>Chlorobaculum</taxon>
    </lineage>
</organism>
<gene>
    <name evidence="1" type="primary">metK</name>
    <name type="ordered locus">Cpar_0689</name>
</gene>
<proteinExistence type="inferred from homology"/>
<comment type="function">
    <text evidence="1">Catalyzes the formation of S-adenosylmethionine (AdoMet) from methionine and ATP. The overall synthetic reaction is composed of two sequential steps, AdoMet formation and the subsequent tripolyphosphate hydrolysis which occurs prior to release of AdoMet from the enzyme.</text>
</comment>
<comment type="catalytic activity">
    <reaction evidence="1">
        <text>L-methionine + ATP + H2O = S-adenosyl-L-methionine + phosphate + diphosphate</text>
        <dbReference type="Rhea" id="RHEA:21080"/>
        <dbReference type="ChEBI" id="CHEBI:15377"/>
        <dbReference type="ChEBI" id="CHEBI:30616"/>
        <dbReference type="ChEBI" id="CHEBI:33019"/>
        <dbReference type="ChEBI" id="CHEBI:43474"/>
        <dbReference type="ChEBI" id="CHEBI:57844"/>
        <dbReference type="ChEBI" id="CHEBI:59789"/>
        <dbReference type="EC" id="2.5.1.6"/>
    </reaction>
</comment>
<comment type="cofactor">
    <cofactor evidence="1">
        <name>Mg(2+)</name>
        <dbReference type="ChEBI" id="CHEBI:18420"/>
    </cofactor>
    <text evidence="1">Binds 2 divalent ions per subunit.</text>
</comment>
<comment type="cofactor">
    <cofactor evidence="1">
        <name>K(+)</name>
        <dbReference type="ChEBI" id="CHEBI:29103"/>
    </cofactor>
    <text evidence="1">Binds 1 potassium ion per subunit.</text>
</comment>
<comment type="pathway">
    <text evidence="1">Amino-acid biosynthesis; S-adenosyl-L-methionine biosynthesis; S-adenosyl-L-methionine from L-methionine: step 1/1.</text>
</comment>
<comment type="subunit">
    <text evidence="1">Homotetramer; dimer of dimers.</text>
</comment>
<comment type="subcellular location">
    <subcellularLocation>
        <location evidence="1">Cytoplasm</location>
    </subcellularLocation>
</comment>
<comment type="similarity">
    <text evidence="1">Belongs to the AdoMet synthase family.</text>
</comment>